<gene>
    <name evidence="1" type="primary">lipA</name>
    <name type="ordered locus">ECED1_0624</name>
</gene>
<keyword id="KW-0004">4Fe-4S</keyword>
<keyword id="KW-0963">Cytoplasm</keyword>
<keyword id="KW-0408">Iron</keyword>
<keyword id="KW-0411">Iron-sulfur</keyword>
<keyword id="KW-0479">Metal-binding</keyword>
<keyword id="KW-0949">S-adenosyl-L-methionine</keyword>
<keyword id="KW-0808">Transferase</keyword>
<reference key="1">
    <citation type="journal article" date="2009" name="PLoS Genet.">
        <title>Organised genome dynamics in the Escherichia coli species results in highly diverse adaptive paths.</title>
        <authorList>
            <person name="Touchon M."/>
            <person name="Hoede C."/>
            <person name="Tenaillon O."/>
            <person name="Barbe V."/>
            <person name="Baeriswyl S."/>
            <person name="Bidet P."/>
            <person name="Bingen E."/>
            <person name="Bonacorsi S."/>
            <person name="Bouchier C."/>
            <person name="Bouvet O."/>
            <person name="Calteau A."/>
            <person name="Chiapello H."/>
            <person name="Clermont O."/>
            <person name="Cruveiller S."/>
            <person name="Danchin A."/>
            <person name="Diard M."/>
            <person name="Dossat C."/>
            <person name="Karoui M.E."/>
            <person name="Frapy E."/>
            <person name="Garry L."/>
            <person name="Ghigo J.M."/>
            <person name="Gilles A.M."/>
            <person name="Johnson J."/>
            <person name="Le Bouguenec C."/>
            <person name="Lescat M."/>
            <person name="Mangenot S."/>
            <person name="Martinez-Jehanne V."/>
            <person name="Matic I."/>
            <person name="Nassif X."/>
            <person name="Oztas S."/>
            <person name="Petit M.A."/>
            <person name="Pichon C."/>
            <person name="Rouy Z."/>
            <person name="Ruf C.S."/>
            <person name="Schneider D."/>
            <person name="Tourret J."/>
            <person name="Vacherie B."/>
            <person name="Vallenet D."/>
            <person name="Medigue C."/>
            <person name="Rocha E.P.C."/>
            <person name="Denamur E."/>
        </authorList>
    </citation>
    <scope>NUCLEOTIDE SEQUENCE [LARGE SCALE GENOMIC DNA]</scope>
    <source>
        <strain>ED1a</strain>
    </source>
</reference>
<organism>
    <name type="scientific">Escherichia coli O81 (strain ED1a)</name>
    <dbReference type="NCBI Taxonomy" id="585397"/>
    <lineage>
        <taxon>Bacteria</taxon>
        <taxon>Pseudomonadati</taxon>
        <taxon>Pseudomonadota</taxon>
        <taxon>Gammaproteobacteria</taxon>
        <taxon>Enterobacterales</taxon>
        <taxon>Enterobacteriaceae</taxon>
        <taxon>Escherichia</taxon>
    </lineage>
</organism>
<accession>B7MRR5</accession>
<protein>
    <recommendedName>
        <fullName evidence="1">Lipoyl synthase</fullName>
        <ecNumber evidence="1">2.8.1.8</ecNumber>
    </recommendedName>
    <alternativeName>
        <fullName evidence="1">Lip-syn</fullName>
        <shortName evidence="1">LS</shortName>
    </alternativeName>
    <alternativeName>
        <fullName evidence="1">Lipoate synthase</fullName>
    </alternativeName>
    <alternativeName>
        <fullName evidence="1">Lipoic acid synthase</fullName>
    </alternativeName>
    <alternativeName>
        <fullName evidence="1">Sulfur insertion protein LipA</fullName>
    </alternativeName>
</protein>
<comment type="function">
    <text evidence="1">Catalyzes the radical-mediated insertion of two sulfur atoms into the C-6 and C-8 positions of the octanoyl moiety bound to the lipoyl domains of lipoate-dependent enzymes, thereby converting the octanoylated domains into lipoylated derivatives.</text>
</comment>
<comment type="catalytic activity">
    <reaction evidence="1">
        <text>[[Fe-S] cluster scaffold protein carrying a second [4Fe-4S](2+) cluster] + N(6)-octanoyl-L-lysyl-[protein] + 2 oxidized [2Fe-2S]-[ferredoxin] + 2 S-adenosyl-L-methionine + 4 H(+) = [[Fe-S] cluster scaffold protein] + N(6)-[(R)-dihydrolipoyl]-L-lysyl-[protein] + 4 Fe(3+) + 2 hydrogen sulfide + 2 5'-deoxyadenosine + 2 L-methionine + 2 reduced [2Fe-2S]-[ferredoxin]</text>
        <dbReference type="Rhea" id="RHEA:16585"/>
        <dbReference type="Rhea" id="RHEA-COMP:9928"/>
        <dbReference type="Rhea" id="RHEA-COMP:10000"/>
        <dbReference type="Rhea" id="RHEA-COMP:10001"/>
        <dbReference type="Rhea" id="RHEA-COMP:10475"/>
        <dbReference type="Rhea" id="RHEA-COMP:14568"/>
        <dbReference type="Rhea" id="RHEA-COMP:14569"/>
        <dbReference type="ChEBI" id="CHEBI:15378"/>
        <dbReference type="ChEBI" id="CHEBI:17319"/>
        <dbReference type="ChEBI" id="CHEBI:29034"/>
        <dbReference type="ChEBI" id="CHEBI:29919"/>
        <dbReference type="ChEBI" id="CHEBI:33722"/>
        <dbReference type="ChEBI" id="CHEBI:33737"/>
        <dbReference type="ChEBI" id="CHEBI:33738"/>
        <dbReference type="ChEBI" id="CHEBI:57844"/>
        <dbReference type="ChEBI" id="CHEBI:59789"/>
        <dbReference type="ChEBI" id="CHEBI:78809"/>
        <dbReference type="ChEBI" id="CHEBI:83100"/>
        <dbReference type="EC" id="2.8.1.8"/>
    </reaction>
</comment>
<comment type="cofactor">
    <cofactor evidence="1">
        <name>[4Fe-4S] cluster</name>
        <dbReference type="ChEBI" id="CHEBI:49883"/>
    </cofactor>
    <text evidence="1">Binds 2 [4Fe-4S] clusters per subunit. One cluster is coordinated with 3 cysteines and an exchangeable S-adenosyl-L-methionine.</text>
</comment>
<comment type="pathway">
    <text evidence="1">Protein modification; protein lipoylation via endogenous pathway; protein N(6)-(lipoyl)lysine from octanoyl-[acyl-carrier-protein]: step 2/2.</text>
</comment>
<comment type="subcellular location">
    <subcellularLocation>
        <location evidence="1">Cytoplasm</location>
    </subcellularLocation>
</comment>
<comment type="similarity">
    <text evidence="1">Belongs to the radical SAM superfamily. Lipoyl synthase family.</text>
</comment>
<dbReference type="EC" id="2.8.1.8" evidence="1"/>
<dbReference type="EMBL" id="CU928162">
    <property type="protein sequence ID" value="CAR06832.1"/>
    <property type="molecule type" value="Genomic_DNA"/>
</dbReference>
<dbReference type="RefSeq" id="WP_000042632.1">
    <property type="nucleotide sequence ID" value="NC_011745.1"/>
</dbReference>
<dbReference type="SMR" id="B7MRR5"/>
<dbReference type="GeneID" id="93776854"/>
<dbReference type="KEGG" id="ecq:ECED1_0624"/>
<dbReference type="HOGENOM" id="CLU_033144_2_1_6"/>
<dbReference type="UniPathway" id="UPA00538">
    <property type="reaction ID" value="UER00593"/>
</dbReference>
<dbReference type="Proteomes" id="UP000000748">
    <property type="component" value="Chromosome"/>
</dbReference>
<dbReference type="GO" id="GO:0005737">
    <property type="term" value="C:cytoplasm"/>
    <property type="evidence" value="ECO:0007669"/>
    <property type="project" value="UniProtKB-SubCell"/>
</dbReference>
<dbReference type="GO" id="GO:0051539">
    <property type="term" value="F:4 iron, 4 sulfur cluster binding"/>
    <property type="evidence" value="ECO:0007669"/>
    <property type="project" value="UniProtKB-UniRule"/>
</dbReference>
<dbReference type="GO" id="GO:0016992">
    <property type="term" value="F:lipoate synthase activity"/>
    <property type="evidence" value="ECO:0007669"/>
    <property type="project" value="UniProtKB-UniRule"/>
</dbReference>
<dbReference type="GO" id="GO:0046872">
    <property type="term" value="F:metal ion binding"/>
    <property type="evidence" value="ECO:0007669"/>
    <property type="project" value="UniProtKB-KW"/>
</dbReference>
<dbReference type="CDD" id="cd01335">
    <property type="entry name" value="Radical_SAM"/>
    <property type="match status" value="1"/>
</dbReference>
<dbReference type="FunFam" id="3.20.20.70:FF:000023">
    <property type="entry name" value="Lipoyl synthase"/>
    <property type="match status" value="1"/>
</dbReference>
<dbReference type="Gene3D" id="3.20.20.70">
    <property type="entry name" value="Aldolase class I"/>
    <property type="match status" value="1"/>
</dbReference>
<dbReference type="HAMAP" id="MF_00206">
    <property type="entry name" value="Lipoyl_synth"/>
    <property type="match status" value="1"/>
</dbReference>
<dbReference type="InterPro" id="IPR013785">
    <property type="entry name" value="Aldolase_TIM"/>
</dbReference>
<dbReference type="InterPro" id="IPR006638">
    <property type="entry name" value="Elp3/MiaA/NifB-like_rSAM"/>
</dbReference>
<dbReference type="InterPro" id="IPR031691">
    <property type="entry name" value="LIAS_N"/>
</dbReference>
<dbReference type="InterPro" id="IPR003698">
    <property type="entry name" value="Lipoyl_synth"/>
</dbReference>
<dbReference type="InterPro" id="IPR007197">
    <property type="entry name" value="rSAM"/>
</dbReference>
<dbReference type="NCBIfam" id="TIGR00510">
    <property type="entry name" value="lipA"/>
    <property type="match status" value="1"/>
</dbReference>
<dbReference type="NCBIfam" id="NF004019">
    <property type="entry name" value="PRK05481.1"/>
    <property type="match status" value="1"/>
</dbReference>
<dbReference type="NCBIfam" id="NF009544">
    <property type="entry name" value="PRK12928.1"/>
    <property type="match status" value="1"/>
</dbReference>
<dbReference type="PANTHER" id="PTHR10949">
    <property type="entry name" value="LIPOYL SYNTHASE"/>
    <property type="match status" value="1"/>
</dbReference>
<dbReference type="PANTHER" id="PTHR10949:SF0">
    <property type="entry name" value="LIPOYL SYNTHASE, MITOCHONDRIAL"/>
    <property type="match status" value="1"/>
</dbReference>
<dbReference type="Pfam" id="PF16881">
    <property type="entry name" value="LIAS_N"/>
    <property type="match status" value="1"/>
</dbReference>
<dbReference type="Pfam" id="PF04055">
    <property type="entry name" value="Radical_SAM"/>
    <property type="match status" value="1"/>
</dbReference>
<dbReference type="PIRSF" id="PIRSF005963">
    <property type="entry name" value="Lipoyl_synth"/>
    <property type="match status" value="1"/>
</dbReference>
<dbReference type="SFLD" id="SFLDF00271">
    <property type="entry name" value="lipoyl_synthase"/>
    <property type="match status" value="1"/>
</dbReference>
<dbReference type="SFLD" id="SFLDG01058">
    <property type="entry name" value="lipoyl_synthase_like"/>
    <property type="match status" value="1"/>
</dbReference>
<dbReference type="SMART" id="SM00729">
    <property type="entry name" value="Elp3"/>
    <property type="match status" value="1"/>
</dbReference>
<dbReference type="SUPFAM" id="SSF102114">
    <property type="entry name" value="Radical SAM enzymes"/>
    <property type="match status" value="1"/>
</dbReference>
<dbReference type="PROSITE" id="PS51918">
    <property type="entry name" value="RADICAL_SAM"/>
    <property type="match status" value="1"/>
</dbReference>
<feature type="chain" id="PRO_1000124632" description="Lipoyl synthase">
    <location>
        <begin position="1"/>
        <end position="321"/>
    </location>
</feature>
<feature type="domain" description="Radical SAM core" evidence="2">
    <location>
        <begin position="80"/>
        <end position="297"/>
    </location>
</feature>
<feature type="binding site" evidence="1">
    <location>
        <position position="68"/>
    </location>
    <ligand>
        <name>[4Fe-4S] cluster</name>
        <dbReference type="ChEBI" id="CHEBI:49883"/>
        <label>1</label>
    </ligand>
</feature>
<feature type="binding site" evidence="1">
    <location>
        <position position="73"/>
    </location>
    <ligand>
        <name>[4Fe-4S] cluster</name>
        <dbReference type="ChEBI" id="CHEBI:49883"/>
        <label>1</label>
    </ligand>
</feature>
<feature type="binding site" evidence="1">
    <location>
        <position position="79"/>
    </location>
    <ligand>
        <name>[4Fe-4S] cluster</name>
        <dbReference type="ChEBI" id="CHEBI:49883"/>
        <label>1</label>
    </ligand>
</feature>
<feature type="binding site" evidence="1">
    <location>
        <position position="94"/>
    </location>
    <ligand>
        <name>[4Fe-4S] cluster</name>
        <dbReference type="ChEBI" id="CHEBI:49883"/>
        <label>2</label>
        <note>4Fe-4S-S-AdoMet</note>
    </ligand>
</feature>
<feature type="binding site" evidence="1">
    <location>
        <position position="98"/>
    </location>
    <ligand>
        <name>[4Fe-4S] cluster</name>
        <dbReference type="ChEBI" id="CHEBI:49883"/>
        <label>2</label>
        <note>4Fe-4S-S-AdoMet</note>
    </ligand>
</feature>
<feature type="binding site" evidence="1">
    <location>
        <position position="101"/>
    </location>
    <ligand>
        <name>[4Fe-4S] cluster</name>
        <dbReference type="ChEBI" id="CHEBI:49883"/>
        <label>2</label>
        <note>4Fe-4S-S-AdoMet</note>
    </ligand>
</feature>
<feature type="binding site" evidence="1">
    <location>
        <position position="308"/>
    </location>
    <ligand>
        <name>[4Fe-4S] cluster</name>
        <dbReference type="ChEBI" id="CHEBI:49883"/>
        <label>1</label>
    </ligand>
</feature>
<name>LIPA_ECO81</name>
<sequence length="321" mass="36072">MSKPIVMERGVKYRDADKMALIPVKNVATEREALLRKPEWMKIKLPADSTRIQGIKAAMRKNGLHSVCEEASCPNLAECFNHGTATFMILGAICTRRCPFCDVAHGRPVAPDANEPVKLAQTIADMALRYVVITSVDRDDLRDGGAQHFADCITAIREKSPQIKIETLVPDFRGRMDRALDILTATPPDVFNHNLENVPRIYRQVRPGADYNWSLKLLERFKEAHPEIPTKSGLMVGLGETNEEIIEVMRDLRRHGVTMLTLGQYLQPSRHHLPVQRYVSPDEFDEMKAEALAMGFTHAACGPFVRSSYHADLQAKGMEVK</sequence>
<evidence type="ECO:0000255" key="1">
    <source>
        <dbReference type="HAMAP-Rule" id="MF_00206"/>
    </source>
</evidence>
<evidence type="ECO:0000255" key="2">
    <source>
        <dbReference type="PROSITE-ProRule" id="PRU01266"/>
    </source>
</evidence>
<proteinExistence type="inferred from homology"/>